<feature type="chain" id="PRO_0000290982" description="Small ribosomal subunit protein uS8c">
    <location>
        <begin position="1"/>
        <end position="136"/>
    </location>
</feature>
<reference key="1">
    <citation type="journal article" date="2007" name="Theor. Appl. Genet.">
        <title>Complete chloroplast genome sequences of Hordeum vulgare, Sorghum bicolor and Agrostis stolonifera, and comparative analyses with other grass genomes.</title>
        <authorList>
            <person name="Saski C."/>
            <person name="Lee S.-B."/>
            <person name="Fjellheim S."/>
            <person name="Guda C."/>
            <person name="Jansen R.K."/>
            <person name="Luo H."/>
            <person name="Tomkins J."/>
            <person name="Rognli O.A."/>
            <person name="Daniell H."/>
            <person name="Clarke J.L."/>
        </authorList>
    </citation>
    <scope>NUCLEOTIDE SEQUENCE [LARGE SCALE GENOMIC DNA]</scope>
    <source>
        <strain>cv. Morex</strain>
    </source>
</reference>
<protein>
    <recommendedName>
        <fullName evidence="2">Small ribosomal subunit protein uS8c</fullName>
    </recommendedName>
    <alternativeName>
        <fullName>30S ribosomal protein S8, chloroplastic</fullName>
    </alternativeName>
</protein>
<dbReference type="EMBL" id="EF115541">
    <property type="protein sequence ID" value="ABK79447.1"/>
    <property type="molecule type" value="Genomic_DNA"/>
</dbReference>
<dbReference type="RefSeq" id="YP_010144460.1">
    <property type="nucleotide sequence ID" value="NC_056985.1"/>
</dbReference>
<dbReference type="RefSeq" id="YP_874688.1">
    <property type="nucleotide sequence ID" value="NC_008590.1"/>
</dbReference>
<dbReference type="SMR" id="A1E9M6"/>
<dbReference type="GeneID" id="4525110"/>
<dbReference type="GeneID" id="67140626"/>
<dbReference type="GO" id="GO:0009507">
    <property type="term" value="C:chloroplast"/>
    <property type="evidence" value="ECO:0007669"/>
    <property type="project" value="UniProtKB-SubCell"/>
</dbReference>
<dbReference type="GO" id="GO:1990904">
    <property type="term" value="C:ribonucleoprotein complex"/>
    <property type="evidence" value="ECO:0007669"/>
    <property type="project" value="UniProtKB-KW"/>
</dbReference>
<dbReference type="GO" id="GO:0005840">
    <property type="term" value="C:ribosome"/>
    <property type="evidence" value="ECO:0007669"/>
    <property type="project" value="UniProtKB-KW"/>
</dbReference>
<dbReference type="GO" id="GO:0019843">
    <property type="term" value="F:rRNA binding"/>
    <property type="evidence" value="ECO:0007669"/>
    <property type="project" value="UniProtKB-UniRule"/>
</dbReference>
<dbReference type="GO" id="GO:0003735">
    <property type="term" value="F:structural constituent of ribosome"/>
    <property type="evidence" value="ECO:0007669"/>
    <property type="project" value="InterPro"/>
</dbReference>
<dbReference type="GO" id="GO:0006412">
    <property type="term" value="P:translation"/>
    <property type="evidence" value="ECO:0007669"/>
    <property type="project" value="UniProtKB-UniRule"/>
</dbReference>
<dbReference type="FunFam" id="3.30.1490.10:FF:000001">
    <property type="entry name" value="30S ribosomal protein S8"/>
    <property type="match status" value="1"/>
</dbReference>
<dbReference type="FunFam" id="3.30.1370.30:FF:000004">
    <property type="entry name" value="30S ribosomal protein S8, chloroplastic"/>
    <property type="match status" value="1"/>
</dbReference>
<dbReference type="Gene3D" id="3.30.1370.30">
    <property type="match status" value="1"/>
</dbReference>
<dbReference type="Gene3D" id="3.30.1490.10">
    <property type="match status" value="1"/>
</dbReference>
<dbReference type="HAMAP" id="MF_01302_B">
    <property type="entry name" value="Ribosomal_uS8_B"/>
    <property type="match status" value="1"/>
</dbReference>
<dbReference type="InterPro" id="IPR000630">
    <property type="entry name" value="Ribosomal_uS8"/>
</dbReference>
<dbReference type="InterPro" id="IPR047863">
    <property type="entry name" value="Ribosomal_uS8_CS"/>
</dbReference>
<dbReference type="InterPro" id="IPR035987">
    <property type="entry name" value="Ribosomal_uS8_sf"/>
</dbReference>
<dbReference type="NCBIfam" id="NF001109">
    <property type="entry name" value="PRK00136.1"/>
    <property type="match status" value="1"/>
</dbReference>
<dbReference type="PANTHER" id="PTHR11758">
    <property type="entry name" value="40S RIBOSOMAL PROTEIN S15A"/>
    <property type="match status" value="1"/>
</dbReference>
<dbReference type="Pfam" id="PF00410">
    <property type="entry name" value="Ribosomal_S8"/>
    <property type="match status" value="1"/>
</dbReference>
<dbReference type="SUPFAM" id="SSF56047">
    <property type="entry name" value="Ribosomal protein S8"/>
    <property type="match status" value="1"/>
</dbReference>
<dbReference type="PROSITE" id="PS00053">
    <property type="entry name" value="RIBOSOMAL_S8"/>
    <property type="match status" value="1"/>
</dbReference>
<evidence type="ECO:0000250" key="1"/>
<evidence type="ECO:0000305" key="2"/>
<geneLocation type="chloroplast"/>
<sequence length="136" mass="15709">MGKDTIADLLTSIRNADMNKKGTVRVVSTNITENIVKILLREGFLESVRKHQERNRYFLVSTLRHQKRKTRKGIYRTRTFLKRISRPGLRIYTNYQGIPKVLGGMGIAILSTSRGIMTDREARLNRIGGEVLCYIW</sequence>
<proteinExistence type="inferred from homology"/>
<comment type="function">
    <text evidence="1">One of the primary rRNA binding proteins, it binds directly to 16S rRNA central domain where it helps coordinate assembly of the platform of the 30S subunit.</text>
</comment>
<comment type="subunit">
    <text evidence="1">Part of the 30S ribosomal subunit.</text>
</comment>
<comment type="subcellular location">
    <subcellularLocation>
        <location>Plastid</location>
        <location>Chloroplast</location>
    </subcellularLocation>
</comment>
<comment type="similarity">
    <text evidence="2">Belongs to the universal ribosomal protein uS8 family.</text>
</comment>
<name>RR8_HORVU</name>
<keyword id="KW-0150">Chloroplast</keyword>
<keyword id="KW-0934">Plastid</keyword>
<keyword id="KW-0687">Ribonucleoprotein</keyword>
<keyword id="KW-0689">Ribosomal protein</keyword>
<keyword id="KW-0694">RNA-binding</keyword>
<keyword id="KW-0699">rRNA-binding</keyword>
<organism>
    <name type="scientific">Hordeum vulgare</name>
    <name type="common">Barley</name>
    <dbReference type="NCBI Taxonomy" id="4513"/>
    <lineage>
        <taxon>Eukaryota</taxon>
        <taxon>Viridiplantae</taxon>
        <taxon>Streptophyta</taxon>
        <taxon>Embryophyta</taxon>
        <taxon>Tracheophyta</taxon>
        <taxon>Spermatophyta</taxon>
        <taxon>Magnoliopsida</taxon>
        <taxon>Liliopsida</taxon>
        <taxon>Poales</taxon>
        <taxon>Poaceae</taxon>
        <taxon>BOP clade</taxon>
        <taxon>Pooideae</taxon>
        <taxon>Triticodae</taxon>
        <taxon>Triticeae</taxon>
        <taxon>Hordeinae</taxon>
        <taxon>Hordeum</taxon>
    </lineage>
</organism>
<gene>
    <name type="primary">rps8</name>
</gene>
<accession>A1E9M6</accession>